<comment type="function">
    <text evidence="1">Catalyzes the conversion of dihydroorotate to orotate with fumarate as the electron acceptor.</text>
</comment>
<comment type="catalytic activity">
    <reaction>
        <text>(S)-dihydroorotate + fumarate = orotate + succinate</text>
        <dbReference type="Rhea" id="RHEA:30059"/>
        <dbReference type="ChEBI" id="CHEBI:29806"/>
        <dbReference type="ChEBI" id="CHEBI:30031"/>
        <dbReference type="ChEBI" id="CHEBI:30839"/>
        <dbReference type="ChEBI" id="CHEBI:30864"/>
        <dbReference type="EC" id="1.3.98.1"/>
    </reaction>
</comment>
<comment type="cofactor">
    <cofactor evidence="1">
        <name>FMN</name>
        <dbReference type="ChEBI" id="CHEBI:58210"/>
    </cofactor>
    <text evidence="1">Binds 1 FMN per subunit.</text>
</comment>
<comment type="pathway">
    <text>Pyrimidine metabolism; UMP biosynthesis via de novo pathway.</text>
</comment>
<comment type="subunit">
    <text evidence="1">Homodimer.</text>
</comment>
<comment type="subcellular location">
    <subcellularLocation>
        <location evidence="1">Cytoplasm</location>
    </subcellularLocation>
</comment>
<comment type="similarity">
    <text evidence="2">Belongs to the dihydroorotate dehydrogenase family. Type 1 subfamily.</text>
</comment>
<keyword id="KW-0963">Cytoplasm</keyword>
<keyword id="KW-0285">Flavoprotein</keyword>
<keyword id="KW-0288">FMN</keyword>
<keyword id="KW-0560">Oxidoreductase</keyword>
<keyword id="KW-0665">Pyrimidine biosynthesis</keyword>
<keyword id="KW-1185">Reference proteome</keyword>
<name>PYRDA_STRP1</name>
<gene>
    <name type="primary">pyrD</name>
    <name type="ordered locus">SPy_1432</name>
    <name type="ordered locus">M5005_Spy1165</name>
</gene>
<feature type="chain" id="PRO_1000100230" description="Putative dihydroorotate dehydrogenase A (fumarate)">
    <location>
        <begin position="1"/>
        <end position="311"/>
    </location>
</feature>
<feature type="active site" description="Nucleophile">
    <location>
        <position position="131"/>
    </location>
</feature>
<feature type="binding site" evidence="1">
    <location>
        <begin position="45"/>
        <end position="46"/>
    </location>
    <ligand>
        <name>FMN</name>
        <dbReference type="ChEBI" id="CHEBI:58210"/>
    </ligand>
</feature>
<feature type="binding site" evidence="1">
    <location>
        <position position="45"/>
    </location>
    <ligand>
        <name>substrate</name>
    </ligand>
</feature>
<feature type="binding site" evidence="1">
    <location>
        <begin position="69"/>
        <end position="73"/>
    </location>
    <ligand>
        <name>substrate</name>
    </ligand>
</feature>
<feature type="binding site" evidence="1">
    <location>
        <position position="128"/>
    </location>
    <ligand>
        <name>FMN</name>
        <dbReference type="ChEBI" id="CHEBI:58210"/>
    </ligand>
</feature>
<feature type="binding site" evidence="1">
    <location>
        <position position="128"/>
    </location>
    <ligand>
        <name>substrate</name>
    </ligand>
</feature>
<feature type="binding site" evidence="1">
    <location>
        <position position="165"/>
    </location>
    <ligand>
        <name>FMN</name>
        <dbReference type="ChEBI" id="CHEBI:58210"/>
    </ligand>
</feature>
<feature type="binding site" evidence="1">
    <location>
        <position position="193"/>
    </location>
    <ligand>
        <name>FMN</name>
        <dbReference type="ChEBI" id="CHEBI:58210"/>
    </ligand>
</feature>
<feature type="binding site" evidence="1">
    <location>
        <begin position="194"/>
        <end position="195"/>
    </location>
    <ligand>
        <name>substrate</name>
    </ligand>
</feature>
<feature type="binding site" evidence="1">
    <location>
        <position position="220"/>
    </location>
    <ligand>
        <name>FMN</name>
        <dbReference type="ChEBI" id="CHEBI:58210"/>
    </ligand>
</feature>
<feature type="binding site" evidence="1">
    <location>
        <begin position="248"/>
        <end position="249"/>
    </location>
    <ligand>
        <name>FMN</name>
        <dbReference type="ChEBI" id="CHEBI:58210"/>
    </ligand>
</feature>
<feature type="binding site" evidence="1">
    <location>
        <begin position="270"/>
        <end position="271"/>
    </location>
    <ligand>
        <name>FMN</name>
        <dbReference type="ChEBI" id="CHEBI:58210"/>
    </ligand>
</feature>
<organism>
    <name type="scientific">Streptococcus pyogenes serotype M1</name>
    <dbReference type="NCBI Taxonomy" id="301447"/>
    <lineage>
        <taxon>Bacteria</taxon>
        <taxon>Bacillati</taxon>
        <taxon>Bacillota</taxon>
        <taxon>Bacilli</taxon>
        <taxon>Lactobacillales</taxon>
        <taxon>Streptococcaceae</taxon>
        <taxon>Streptococcus</taxon>
    </lineage>
</organism>
<proteinExistence type="inferred from homology"/>
<accession>Q99Z28</accession>
<accession>Q48XZ2</accession>
<evidence type="ECO:0000250" key="1"/>
<evidence type="ECO:0000305" key="2"/>
<protein>
    <recommendedName>
        <fullName>Putative dihydroorotate dehydrogenase A (fumarate)</fullName>
        <shortName>DHOD A</shortName>
        <shortName>DHODase A</shortName>
        <shortName>DHOdehase A</shortName>
        <ecNumber>1.3.98.1</ecNumber>
    </recommendedName>
</protein>
<dbReference type="EC" id="1.3.98.1"/>
<dbReference type="EMBL" id="AE004092">
    <property type="protein sequence ID" value="AAK34239.1"/>
    <property type="molecule type" value="Genomic_DNA"/>
</dbReference>
<dbReference type="EMBL" id="CP000017">
    <property type="protein sequence ID" value="AAZ51783.1"/>
    <property type="molecule type" value="Genomic_DNA"/>
</dbReference>
<dbReference type="RefSeq" id="NP_269518.1">
    <property type="nucleotide sequence ID" value="NC_002737.2"/>
</dbReference>
<dbReference type="SMR" id="Q99Z28"/>
<dbReference type="PaxDb" id="1314-HKU360_01199"/>
<dbReference type="KEGG" id="spy:SPy_1432"/>
<dbReference type="KEGG" id="spz:M5005_Spy1165"/>
<dbReference type="PATRIC" id="fig|160490.10.peg.1246"/>
<dbReference type="HOGENOM" id="CLU_042042_3_0_9"/>
<dbReference type="OMA" id="FDFAHFD"/>
<dbReference type="UniPathway" id="UPA00070"/>
<dbReference type="Proteomes" id="UP000000750">
    <property type="component" value="Chromosome"/>
</dbReference>
<dbReference type="GO" id="GO:0005737">
    <property type="term" value="C:cytoplasm"/>
    <property type="evidence" value="ECO:0007669"/>
    <property type="project" value="UniProtKB-SubCell"/>
</dbReference>
<dbReference type="GO" id="GO:1990663">
    <property type="term" value="F:dihydroorotate dehydrogenase (fumarate) activity"/>
    <property type="evidence" value="ECO:0007669"/>
    <property type="project" value="UniProtKB-EC"/>
</dbReference>
<dbReference type="GO" id="GO:0006207">
    <property type="term" value="P:'de novo' pyrimidine nucleobase biosynthetic process"/>
    <property type="evidence" value="ECO:0007669"/>
    <property type="project" value="InterPro"/>
</dbReference>
<dbReference type="GO" id="GO:0044205">
    <property type="term" value="P:'de novo' UMP biosynthetic process"/>
    <property type="evidence" value="ECO:0007669"/>
    <property type="project" value="UniProtKB-UniRule"/>
</dbReference>
<dbReference type="CDD" id="cd04741">
    <property type="entry name" value="DHOD_1A_like"/>
    <property type="match status" value="1"/>
</dbReference>
<dbReference type="FunFam" id="3.20.20.70:FF:000027">
    <property type="entry name" value="Dihydropyrimidine dehydrogenase [NADP(+)]"/>
    <property type="match status" value="1"/>
</dbReference>
<dbReference type="Gene3D" id="3.20.20.70">
    <property type="entry name" value="Aldolase class I"/>
    <property type="match status" value="1"/>
</dbReference>
<dbReference type="HAMAP" id="MF_00224">
    <property type="entry name" value="DHO_dh_type1"/>
    <property type="match status" value="1"/>
</dbReference>
<dbReference type="InterPro" id="IPR013785">
    <property type="entry name" value="Aldolase_TIM"/>
</dbReference>
<dbReference type="InterPro" id="IPR050074">
    <property type="entry name" value="DHO_dehydrogenase"/>
</dbReference>
<dbReference type="InterPro" id="IPR033886">
    <property type="entry name" value="DHOD_1A"/>
</dbReference>
<dbReference type="InterPro" id="IPR024920">
    <property type="entry name" value="Dihydroorotate_DH_1"/>
</dbReference>
<dbReference type="InterPro" id="IPR012135">
    <property type="entry name" value="Dihydroorotate_DH_1_2"/>
</dbReference>
<dbReference type="InterPro" id="IPR005720">
    <property type="entry name" value="Dihydroorotate_DH_cat"/>
</dbReference>
<dbReference type="InterPro" id="IPR001295">
    <property type="entry name" value="Dihydroorotate_DH_CS"/>
</dbReference>
<dbReference type="NCBIfam" id="NF002702">
    <property type="entry name" value="PRK02506.1"/>
    <property type="match status" value="1"/>
</dbReference>
<dbReference type="PANTHER" id="PTHR48109:SF1">
    <property type="entry name" value="DIHYDROOROTATE DEHYDROGENASE (FUMARATE)"/>
    <property type="match status" value="1"/>
</dbReference>
<dbReference type="PANTHER" id="PTHR48109">
    <property type="entry name" value="DIHYDROOROTATE DEHYDROGENASE (QUINONE), MITOCHONDRIAL-RELATED"/>
    <property type="match status" value="1"/>
</dbReference>
<dbReference type="Pfam" id="PF01180">
    <property type="entry name" value="DHO_dh"/>
    <property type="match status" value="1"/>
</dbReference>
<dbReference type="PIRSF" id="PIRSF000164">
    <property type="entry name" value="DHO_oxidase"/>
    <property type="match status" value="1"/>
</dbReference>
<dbReference type="SUPFAM" id="SSF51395">
    <property type="entry name" value="FMN-linked oxidoreductases"/>
    <property type="match status" value="1"/>
</dbReference>
<dbReference type="PROSITE" id="PS00912">
    <property type="entry name" value="DHODEHASE_2"/>
    <property type="match status" value="1"/>
</dbReference>
<sequence length="311" mass="34322">MVSTATQIGHFSFDNCLMNAAGVYCMTKEELMEVEKSQAASFVTKTGTLEVRPGNPEPRYADTRLGSINSMGLPNNGFRYYLDFVSDLAKTGQHKPHFLSVVGLSPTETETILKAIMASDYEGLVELNLSCPNVPGKPQIAYDFETTDQLLENIFTYYTKPLGIKLPPYFDIVHFDQAAAIFNKYPLSFVNCVNSIGNGLVIKDEQVLIKPKNGFGGIGGDYIKPTALANVHAFYKRLKPSIHIIGTGGVKTGRDAFEHILCGASMVQIGTALHQEGPAIFERVTKELKTIMVEKGYQSLDDFRGNLRYKD</sequence>
<reference key="1">
    <citation type="journal article" date="2001" name="Proc. Natl. Acad. Sci. U.S.A.">
        <title>Complete genome sequence of an M1 strain of Streptococcus pyogenes.</title>
        <authorList>
            <person name="Ferretti J.J."/>
            <person name="McShan W.M."/>
            <person name="Ajdic D.J."/>
            <person name="Savic D.J."/>
            <person name="Savic G."/>
            <person name="Lyon K."/>
            <person name="Primeaux C."/>
            <person name="Sezate S."/>
            <person name="Suvorov A.N."/>
            <person name="Kenton S."/>
            <person name="Lai H.S."/>
            <person name="Lin S.P."/>
            <person name="Qian Y."/>
            <person name="Jia H.G."/>
            <person name="Najar F.Z."/>
            <person name="Ren Q."/>
            <person name="Zhu H."/>
            <person name="Song L."/>
            <person name="White J."/>
            <person name="Yuan X."/>
            <person name="Clifton S.W."/>
            <person name="Roe B.A."/>
            <person name="McLaughlin R.E."/>
        </authorList>
    </citation>
    <scope>NUCLEOTIDE SEQUENCE [LARGE SCALE GENOMIC DNA]</scope>
    <source>
        <strain>ATCC 700294 / SF370 / Serotype M1</strain>
    </source>
</reference>
<reference key="2">
    <citation type="journal article" date="2005" name="J. Infect. Dis.">
        <title>Evolutionary origin and emergence of a highly successful clone of serotype M1 group A Streptococcus involved multiple horizontal gene transfer events.</title>
        <authorList>
            <person name="Sumby P."/>
            <person name="Porcella S.F."/>
            <person name="Madrigal A.G."/>
            <person name="Barbian K.D."/>
            <person name="Virtaneva K."/>
            <person name="Ricklefs S.M."/>
            <person name="Sturdevant D.E."/>
            <person name="Graham M.R."/>
            <person name="Vuopio-Varkila J."/>
            <person name="Hoe N.P."/>
            <person name="Musser J.M."/>
        </authorList>
    </citation>
    <scope>NUCLEOTIDE SEQUENCE [LARGE SCALE GENOMIC DNA]</scope>
    <source>
        <strain>ATCC BAA-947 / MGAS5005 / Serotype M1</strain>
    </source>
</reference>